<feature type="chain" id="PRO_1000079540" description="Large ribosomal subunit protein uL10">
    <location>
        <begin position="1"/>
        <end position="176"/>
    </location>
</feature>
<gene>
    <name evidence="1" type="primary">rplJ</name>
    <name type="ordered locus">DehaBAV1_0882</name>
</gene>
<protein>
    <recommendedName>
        <fullName evidence="1">Large ribosomal subunit protein uL10</fullName>
    </recommendedName>
    <alternativeName>
        <fullName evidence="2">50S ribosomal protein L10</fullName>
    </alternativeName>
</protein>
<reference key="1">
    <citation type="submission" date="2007-05" db="EMBL/GenBank/DDBJ databases">
        <title>Complete sequence of Dehalococcoides sp. BAV1.</title>
        <authorList>
            <consortium name="US DOE Joint Genome Institute"/>
            <person name="Copeland A."/>
            <person name="Lucas S."/>
            <person name="Lapidus A."/>
            <person name="Barry K."/>
            <person name="Detter J.C."/>
            <person name="Glavina del Rio T."/>
            <person name="Hammon N."/>
            <person name="Israni S."/>
            <person name="Pitluck S."/>
            <person name="Lowry S."/>
            <person name="Clum A."/>
            <person name="Schmutz J."/>
            <person name="Larimer F."/>
            <person name="Land M."/>
            <person name="Hauser L."/>
            <person name="Kyrpides N."/>
            <person name="Kim E."/>
            <person name="Ritalahti K.M."/>
            <person name="Loeffler F."/>
            <person name="Richardson P."/>
        </authorList>
    </citation>
    <scope>NUCLEOTIDE SEQUENCE [LARGE SCALE GENOMIC DNA]</scope>
    <source>
        <strain>ATCC BAA-2100 / JCM 16839 / KCTC 5957 / BAV1</strain>
    </source>
</reference>
<dbReference type="EMBL" id="CP000688">
    <property type="protein sequence ID" value="ABQ17464.1"/>
    <property type="molecule type" value="Genomic_DNA"/>
</dbReference>
<dbReference type="SMR" id="A5FQR0"/>
<dbReference type="KEGG" id="deb:DehaBAV1_0882"/>
<dbReference type="PATRIC" id="fig|216389.18.peg.932"/>
<dbReference type="HOGENOM" id="CLU_092227_2_1_0"/>
<dbReference type="GO" id="GO:0015934">
    <property type="term" value="C:large ribosomal subunit"/>
    <property type="evidence" value="ECO:0007669"/>
    <property type="project" value="InterPro"/>
</dbReference>
<dbReference type="GO" id="GO:0070180">
    <property type="term" value="F:large ribosomal subunit rRNA binding"/>
    <property type="evidence" value="ECO:0007669"/>
    <property type="project" value="UniProtKB-UniRule"/>
</dbReference>
<dbReference type="GO" id="GO:0003735">
    <property type="term" value="F:structural constituent of ribosome"/>
    <property type="evidence" value="ECO:0007669"/>
    <property type="project" value="InterPro"/>
</dbReference>
<dbReference type="GO" id="GO:0006412">
    <property type="term" value="P:translation"/>
    <property type="evidence" value="ECO:0007669"/>
    <property type="project" value="UniProtKB-UniRule"/>
</dbReference>
<dbReference type="CDD" id="cd05797">
    <property type="entry name" value="Ribosomal_L10"/>
    <property type="match status" value="1"/>
</dbReference>
<dbReference type="Gene3D" id="3.30.70.1730">
    <property type="match status" value="1"/>
</dbReference>
<dbReference type="Gene3D" id="6.10.250.290">
    <property type="match status" value="1"/>
</dbReference>
<dbReference type="HAMAP" id="MF_00362">
    <property type="entry name" value="Ribosomal_uL10"/>
    <property type="match status" value="1"/>
</dbReference>
<dbReference type="InterPro" id="IPR001790">
    <property type="entry name" value="Ribosomal_uL10"/>
</dbReference>
<dbReference type="InterPro" id="IPR043141">
    <property type="entry name" value="Ribosomal_uL10-like_sf"/>
</dbReference>
<dbReference type="InterPro" id="IPR022973">
    <property type="entry name" value="Ribosomal_uL10_bac"/>
</dbReference>
<dbReference type="InterPro" id="IPR047865">
    <property type="entry name" value="Ribosomal_uL10_bac_type"/>
</dbReference>
<dbReference type="InterPro" id="IPR002363">
    <property type="entry name" value="Ribosomal_uL10_CS_bac"/>
</dbReference>
<dbReference type="NCBIfam" id="NF000955">
    <property type="entry name" value="PRK00099.1-1"/>
    <property type="match status" value="1"/>
</dbReference>
<dbReference type="PANTHER" id="PTHR11560">
    <property type="entry name" value="39S RIBOSOMAL PROTEIN L10, MITOCHONDRIAL"/>
    <property type="match status" value="1"/>
</dbReference>
<dbReference type="Pfam" id="PF00466">
    <property type="entry name" value="Ribosomal_L10"/>
    <property type="match status" value="1"/>
</dbReference>
<dbReference type="SUPFAM" id="SSF160369">
    <property type="entry name" value="Ribosomal protein L10-like"/>
    <property type="match status" value="1"/>
</dbReference>
<dbReference type="PROSITE" id="PS01109">
    <property type="entry name" value="RIBOSOMAL_L10"/>
    <property type="match status" value="1"/>
</dbReference>
<organism>
    <name type="scientific">Dehalococcoides mccartyi (strain ATCC BAA-2100 / JCM 16839 / KCTC 5957 / BAV1)</name>
    <dbReference type="NCBI Taxonomy" id="216389"/>
    <lineage>
        <taxon>Bacteria</taxon>
        <taxon>Bacillati</taxon>
        <taxon>Chloroflexota</taxon>
        <taxon>Dehalococcoidia</taxon>
        <taxon>Dehalococcoidales</taxon>
        <taxon>Dehalococcoidaceae</taxon>
        <taxon>Dehalococcoides</taxon>
    </lineage>
</organism>
<evidence type="ECO:0000255" key="1">
    <source>
        <dbReference type="HAMAP-Rule" id="MF_00362"/>
    </source>
</evidence>
<evidence type="ECO:0000305" key="2"/>
<proteinExistence type="inferred from homology"/>
<name>RL10_DEHMB</name>
<sequence length="176" mass="18925">MVKKIRIKKKIAVDELTDALAVAQSAVFTDYRGINTSELTTIRVKLREAGVGYRVLKNTLARRAADNTDHSNIKGAFEGPVAMAYSSNDVVAPARVLMDYISSSKSNLKVTGGYLSNKLISVEEVAELAKLPSREVLISKILAGMQSPITGLAMVLNGPARGLAIVLQARIKQLEG</sequence>
<keyword id="KW-0687">Ribonucleoprotein</keyword>
<keyword id="KW-0689">Ribosomal protein</keyword>
<keyword id="KW-0694">RNA-binding</keyword>
<keyword id="KW-0699">rRNA-binding</keyword>
<comment type="function">
    <text evidence="1">Forms part of the ribosomal stalk, playing a central role in the interaction of the ribosome with GTP-bound translation factors.</text>
</comment>
<comment type="subunit">
    <text evidence="1">Part of the ribosomal stalk of the 50S ribosomal subunit. The N-terminus interacts with L11 and the large rRNA to form the base of the stalk. The C-terminus forms an elongated spine to which L12 dimers bind in a sequential fashion forming a multimeric L10(L12)X complex.</text>
</comment>
<comment type="similarity">
    <text evidence="1">Belongs to the universal ribosomal protein uL10 family.</text>
</comment>
<accession>A5FQR0</accession>